<dbReference type="EMBL" id="AE016830">
    <property type="protein sequence ID" value="AAO80108.1"/>
    <property type="molecule type" value="Genomic_DNA"/>
</dbReference>
<dbReference type="RefSeq" id="NP_814037.1">
    <property type="nucleotide sequence ID" value="NC_004668.1"/>
</dbReference>
<dbReference type="RefSeq" id="WP_002381365.1">
    <property type="nucleotide sequence ID" value="NZ_KE136524.1"/>
</dbReference>
<dbReference type="SMR" id="P59631"/>
<dbReference type="STRING" id="226185.EF_0241"/>
<dbReference type="EnsemblBacteria" id="AAO80108">
    <property type="protein sequence ID" value="AAO80108"/>
    <property type="gene ID" value="EF_0241"/>
</dbReference>
<dbReference type="KEGG" id="efa:EF0241"/>
<dbReference type="PATRIC" id="fig|226185.45.peg.26"/>
<dbReference type="eggNOG" id="COG0393">
    <property type="taxonomic scope" value="Bacteria"/>
</dbReference>
<dbReference type="HOGENOM" id="CLU_117144_1_2_9"/>
<dbReference type="Proteomes" id="UP000001415">
    <property type="component" value="Chromosome"/>
</dbReference>
<dbReference type="Gene3D" id="3.30.110.70">
    <property type="entry name" value="Hypothetical protein apc22750. Chain B"/>
    <property type="match status" value="1"/>
</dbReference>
<dbReference type="HAMAP" id="MF_00338">
    <property type="entry name" value="UPF0145"/>
    <property type="match status" value="1"/>
</dbReference>
<dbReference type="InterPro" id="IPR035439">
    <property type="entry name" value="UPF0145_dom_sf"/>
</dbReference>
<dbReference type="InterPro" id="IPR002765">
    <property type="entry name" value="UPF0145_YbjQ-like"/>
</dbReference>
<dbReference type="PANTHER" id="PTHR34068:SF2">
    <property type="entry name" value="UPF0145 PROTEIN SCO3412"/>
    <property type="match status" value="1"/>
</dbReference>
<dbReference type="PANTHER" id="PTHR34068">
    <property type="entry name" value="UPF0145 PROTEIN YBJQ"/>
    <property type="match status" value="1"/>
</dbReference>
<dbReference type="Pfam" id="PF01906">
    <property type="entry name" value="YbjQ_1"/>
    <property type="match status" value="1"/>
</dbReference>
<dbReference type="SUPFAM" id="SSF117782">
    <property type="entry name" value="YbjQ-like"/>
    <property type="match status" value="1"/>
</dbReference>
<organism>
    <name type="scientific">Enterococcus faecalis (strain ATCC 700802 / V583)</name>
    <dbReference type="NCBI Taxonomy" id="226185"/>
    <lineage>
        <taxon>Bacteria</taxon>
        <taxon>Bacillati</taxon>
        <taxon>Bacillota</taxon>
        <taxon>Bacilli</taxon>
        <taxon>Lactobacillales</taxon>
        <taxon>Enterococcaceae</taxon>
        <taxon>Enterococcus</taxon>
    </lineage>
</organism>
<comment type="similarity">
    <text evidence="1">Belongs to the UPF0145 family.</text>
</comment>
<sequence length="103" mass="11204">MLVTTTERISGQEYEIIGEVFGLTTRSKNMFKDLGAGLKSVVGGEIKGYTDMQREARDQAIERLKAEASKLGADAVVMMRFDSGTIGTDMQSVVAYGTAVKYI</sequence>
<feature type="chain" id="PRO_0000138468" description="UPF0145 protein EF_0241">
    <location>
        <begin position="1"/>
        <end position="103"/>
    </location>
</feature>
<evidence type="ECO:0000305" key="1"/>
<accession>P59631</accession>
<keyword id="KW-1185">Reference proteome</keyword>
<proteinExistence type="inferred from homology"/>
<gene>
    <name type="ordered locus">EF_0241</name>
</gene>
<protein>
    <recommendedName>
        <fullName>UPF0145 protein EF_0241</fullName>
    </recommendedName>
</protein>
<reference key="1">
    <citation type="journal article" date="2003" name="Science">
        <title>Role of mobile DNA in the evolution of vancomycin-resistant Enterococcus faecalis.</title>
        <authorList>
            <person name="Paulsen I.T."/>
            <person name="Banerjei L."/>
            <person name="Myers G.S.A."/>
            <person name="Nelson K.E."/>
            <person name="Seshadri R."/>
            <person name="Read T.D."/>
            <person name="Fouts D.E."/>
            <person name="Eisen J.A."/>
            <person name="Gill S.R."/>
            <person name="Heidelberg J.F."/>
            <person name="Tettelin H."/>
            <person name="Dodson R.J."/>
            <person name="Umayam L.A."/>
            <person name="Brinkac L.M."/>
            <person name="Beanan M.J."/>
            <person name="Daugherty S.C."/>
            <person name="DeBoy R.T."/>
            <person name="Durkin S.A."/>
            <person name="Kolonay J.F."/>
            <person name="Madupu R."/>
            <person name="Nelson W.C."/>
            <person name="Vamathevan J.J."/>
            <person name="Tran B."/>
            <person name="Upton J."/>
            <person name="Hansen T."/>
            <person name="Shetty J."/>
            <person name="Khouri H.M."/>
            <person name="Utterback T.R."/>
            <person name="Radune D."/>
            <person name="Ketchum K.A."/>
            <person name="Dougherty B.A."/>
            <person name="Fraser C.M."/>
        </authorList>
    </citation>
    <scope>NUCLEOTIDE SEQUENCE [LARGE SCALE GENOMIC DNA]</scope>
    <source>
        <strain>ATCC 700802 / V583</strain>
    </source>
</reference>
<name>Y241_ENTFA</name>